<protein>
    <recommendedName>
        <fullName evidence="14">Alpha-1,2-mannosyltransferase ALG9</fullName>
        <ecNumber evidence="6 7">2.4.1.259</ecNumber>
        <ecNumber evidence="6 7">2.4.1.261</ecNumber>
    </recommendedName>
    <alternativeName>
        <fullName evidence="15">Asparagine-linked glycosylation protein 9 homolog</fullName>
    </alternativeName>
    <alternativeName>
        <fullName evidence="9">Disrupted in bipolar disorder protein 1</fullName>
    </alternativeName>
    <alternativeName>
        <fullName evidence="13">Dol-P-Man:Man(6)GlcNAc(2)-PP-Dol alpha-1,2-mannosyltransferase</fullName>
    </alternativeName>
    <alternativeName>
        <fullName evidence="13">Dol-P-Man:Man(8)GlcNAc(2)-PP-Dol alpha-1,2-mannosyltransferase</fullName>
    </alternativeName>
</protein>
<keyword id="KW-0025">Alternative splicing</keyword>
<keyword id="KW-0160">Chromosomal rearrangement</keyword>
<keyword id="KW-0900">Congenital disorder of glycosylation</keyword>
<keyword id="KW-0225">Disease variant</keyword>
<keyword id="KW-0256">Endoplasmic reticulum</keyword>
<keyword id="KW-0325">Glycoprotein</keyword>
<keyword id="KW-0328">Glycosyltransferase</keyword>
<keyword id="KW-0472">Membrane</keyword>
<keyword id="KW-1267">Proteomics identification</keyword>
<keyword id="KW-1185">Reference proteome</keyword>
<keyword id="KW-0808">Transferase</keyword>
<keyword id="KW-0812">Transmembrane</keyword>
<keyword id="KW-1133">Transmembrane helix</keyword>
<sequence>MASRGARQRLKGSGASSGDTAPAADKLRELLGSREAGGAEHRTELSGNKAGQVWAPEGSTAFKCLLSARLCAALLSNISDCDETFNYWEPTHYLIYGEGFQTWEYSPAYAIRSYAYLLLHAWPAAFHARILQTNKILVFYFLRCLLAFVSCICELYFYKAVCKKFGLHVSRMMLAFLVLSTGMFCSSSAFLPSSFCMYTTLIAMTGWYMDKTSIAVLGVAAGAILGWPFSAALGLPIAFDLLVMKHRWKSFFHWSLMALILFLVPVVVIDSYYYGKLVIAPLNIVLYNVFTPHGPDLYGTEPWYFYLINGFLNFNVAFALALLVLPLTSLMEYLLQRFHVQNLGHPYWLTLAPMYIWFIIFFIQPHKEERFLFPVYPLICLCGAVALSALQKCYHFVFQRYRLEHYTVTSNWLALGTVFLFGLLSFSRSVALFRGYHGPLDLYPEFYRIATDPTIHTVPEGRPVNVCVGKEWYRFPSSFLLPDNWQLQFIPSEFRGQLPKPFAEGPLATRIVPTDMNDQNLEEPSRYIDISKCHYLVDLDTMRETPREPKYSSNKEEWISLAYRPFLDASRSSKLLRAFYVPFLSDQYTVYVNYTILKPRKAKQIRKKSGG</sequence>
<organism>
    <name type="scientific">Homo sapiens</name>
    <name type="common">Human</name>
    <dbReference type="NCBI Taxonomy" id="9606"/>
    <lineage>
        <taxon>Eukaryota</taxon>
        <taxon>Metazoa</taxon>
        <taxon>Chordata</taxon>
        <taxon>Craniata</taxon>
        <taxon>Vertebrata</taxon>
        <taxon>Euteleostomi</taxon>
        <taxon>Mammalia</taxon>
        <taxon>Eutheria</taxon>
        <taxon>Euarchontoglires</taxon>
        <taxon>Primates</taxon>
        <taxon>Haplorrhini</taxon>
        <taxon>Catarrhini</taxon>
        <taxon>Hominidae</taxon>
        <taxon>Homo</taxon>
    </lineage>
</organism>
<evidence type="ECO:0000250" key="1">
    <source>
        <dbReference type="UniProtKB" id="P53868"/>
    </source>
</evidence>
<evidence type="ECO:0000255" key="2"/>
<evidence type="ECO:0000256" key="3">
    <source>
        <dbReference type="SAM" id="MobiDB-lite"/>
    </source>
</evidence>
<evidence type="ECO:0000269" key="4">
    <source>
    </source>
</evidence>
<evidence type="ECO:0000269" key="5">
    <source>
    </source>
</evidence>
<evidence type="ECO:0000269" key="6">
    <source>
    </source>
</evidence>
<evidence type="ECO:0000269" key="7">
    <source>
    </source>
</evidence>
<evidence type="ECO:0000269" key="8">
    <source>
    </source>
</evidence>
<evidence type="ECO:0000303" key="9">
    <source>
    </source>
</evidence>
<evidence type="ECO:0000303" key="10">
    <source>
    </source>
</evidence>
<evidence type="ECO:0000303" key="11">
    <source>
    </source>
</evidence>
<evidence type="ECO:0000303" key="12">
    <source ref="2"/>
</evidence>
<evidence type="ECO:0000305" key="13"/>
<evidence type="ECO:0000305" key="14">
    <source>
    </source>
</evidence>
<evidence type="ECO:0000312" key="15">
    <source>
        <dbReference type="HGNC" id="HGNC:15672"/>
    </source>
</evidence>
<proteinExistence type="evidence at protein level"/>
<feature type="chain" id="PRO_0000215787" description="Alpha-1,2-mannosyltransferase ALG9">
    <location>
        <begin position="1"/>
        <end position="611"/>
    </location>
</feature>
<feature type="topological domain" description="Lumenal" evidence="2">
    <location>
        <begin position="1"/>
        <end position="135"/>
    </location>
</feature>
<feature type="transmembrane region" description="Helical" evidence="2">
    <location>
        <begin position="136"/>
        <end position="156"/>
    </location>
</feature>
<feature type="topological domain" description="Cytoplasmic" evidence="2">
    <location>
        <begin position="157"/>
        <end position="171"/>
    </location>
</feature>
<feature type="transmembrane region" description="Helical" evidence="2">
    <location>
        <begin position="172"/>
        <end position="192"/>
    </location>
</feature>
<feature type="topological domain" description="Lumenal" evidence="2">
    <location>
        <begin position="193"/>
        <end position="213"/>
    </location>
</feature>
<feature type="transmembrane region" description="Helical" evidence="2">
    <location>
        <begin position="214"/>
        <end position="234"/>
    </location>
</feature>
<feature type="topological domain" description="Cytoplasmic" evidence="2">
    <location>
        <begin position="235"/>
        <end position="249"/>
    </location>
</feature>
<feature type="transmembrane region" description="Helical" evidence="2">
    <location>
        <begin position="250"/>
        <end position="270"/>
    </location>
</feature>
<feature type="topological domain" description="Lumenal" evidence="2">
    <location>
        <begin position="271"/>
        <end position="304"/>
    </location>
</feature>
<feature type="transmembrane region" description="Helical" evidence="2">
    <location>
        <begin position="305"/>
        <end position="325"/>
    </location>
</feature>
<feature type="topological domain" description="Cytoplasmic" evidence="2">
    <location>
        <begin position="326"/>
        <end position="342"/>
    </location>
</feature>
<feature type="transmembrane region" description="Helical" evidence="2">
    <location>
        <begin position="343"/>
        <end position="363"/>
    </location>
</feature>
<feature type="topological domain" description="Lumenal" evidence="2">
    <location>
        <begin position="364"/>
        <end position="370"/>
    </location>
</feature>
<feature type="transmembrane region" description="Helical" evidence="2">
    <location>
        <begin position="371"/>
        <end position="391"/>
    </location>
</feature>
<feature type="topological domain" description="Cytoplasmic" evidence="2">
    <location>
        <begin position="392"/>
        <end position="405"/>
    </location>
</feature>
<feature type="transmembrane region" description="Helical" evidence="2">
    <location>
        <begin position="406"/>
        <end position="426"/>
    </location>
</feature>
<feature type="topological domain" description="Lumenal" evidence="2">
    <location>
        <begin position="427"/>
        <end position="611"/>
    </location>
</feature>
<feature type="region of interest" description="Disordered" evidence="3">
    <location>
        <begin position="1"/>
        <end position="23"/>
    </location>
</feature>
<feature type="compositionally biased region" description="Basic residues" evidence="3">
    <location>
        <begin position="1"/>
        <end position="10"/>
    </location>
</feature>
<feature type="site" description="Breakpoint for translocation" evidence="4">
    <location>
        <position position="340"/>
    </location>
</feature>
<feature type="glycosylation site" description="N-linked (GlcNAc...) asparagine" evidence="2">
    <location>
        <position position="77"/>
    </location>
</feature>
<feature type="glycosylation site" description="N-linked (GlcNAc...) asparagine" evidence="2">
    <location>
        <position position="593"/>
    </location>
</feature>
<feature type="splice variant" id="VSP_015434" description="In isoform 2 and isoform 4." evidence="10 12">
    <location>
        <begin position="1"/>
        <end position="171"/>
    </location>
</feature>
<feature type="splice variant" id="VSP_015435" description="In isoform 3 and isoform 4." evidence="10 11">
    <original>Q</original>
    <variation>QHSFLYFQ</variation>
    <location>
        <position position="391"/>
    </location>
</feature>
<feature type="sequence variant" id="VAR_049221" description="In dbSNP:rs36111204.">
    <original>A</original>
    <variation>P</variation>
    <location>
        <position position="232"/>
    </location>
</feature>
<feature type="sequence variant" id="VAR_049222" description="In dbSNP:rs17113312.">
    <original>S</original>
    <variation>L</variation>
    <location>
        <position position="255"/>
    </location>
</feature>
<feature type="sequence variant" id="VAR_023410" description="In CDG1L; loss of function in dolichol-linked oligosaccharide biosynthetic process; dbSNP:rs121908023." evidence="7">
    <original>Y</original>
    <variation>C</variation>
    <location>
        <position position="287"/>
    </location>
</feature>
<feature type="sequence variant" id="VAR_023411" description="In dbSNP:rs10502151." evidence="4 5 6">
    <original>V</original>
    <variation>I</variation>
    <location>
        <position position="289"/>
    </location>
</feature>
<feature type="sequence variant" id="VAR_023412" description="In dbSNP:rs185149177." evidence="4">
    <original>P</original>
    <variation>L</variation>
    <location>
        <position position="506"/>
    </location>
</feature>
<feature type="sequence variant" id="VAR_023413" description="In CDG1L; loss of function in dolichol-linked oligosaccharide biosynthetic process; dbSNP:rs121908022." evidence="6">
    <original>E</original>
    <variation>K</variation>
    <location>
        <position position="523"/>
    </location>
</feature>
<feature type="sequence variant" id="VAR_049223" description="In dbSNP:rs12575909.">
    <original>I</original>
    <variation>S</variation>
    <location>
        <position position="528"/>
    </location>
</feature>
<feature type="sequence conflict" description="In Ref. 1 and 2." evidence="13" ref="1 2">
    <original>N</original>
    <variation>K</variation>
    <location>
        <position position="309"/>
    </location>
</feature>
<reference key="1">
    <citation type="journal article" date="2002" name="Neurogenetics">
        <title>A mannosyltransferase gene at 11q23 is disrupted by a translocation breakpoint that co-segregates with bipolar affective disorder in a small family.</title>
        <authorList>
            <person name="Baysal B.E."/>
            <person name="Willett-Brozick J.E."/>
            <person name="Badner J.A."/>
            <person name="Corona W."/>
            <person name="Ferrell R.E."/>
            <person name="Nimgaonkar V.L."/>
            <person name="Detera-Wadleigh S.D."/>
        </authorList>
    </citation>
    <scope>NUCLEOTIDE SEQUENCE [MRNA] (ISOFORM 1)</scope>
    <scope>CHROMOSOMAL TRANSLOCATION</scope>
    <scope>TISSUE SPECIFICITY</scope>
    <scope>VARIANTS ILE-289 AND LEU-506</scope>
</reference>
<reference key="2">
    <citation type="submission" date="2001-12" db="EMBL/GenBank/DDBJ databases">
        <authorList>
            <person name="Guo J.H."/>
            <person name="Yu L."/>
        </authorList>
    </citation>
    <scope>NUCLEOTIDE SEQUENCE [LARGE SCALE MRNA] (ISOFORM 2)</scope>
    <source>
        <tissue>Lymphoma</tissue>
    </source>
</reference>
<reference key="3">
    <citation type="journal article" date="2001" name="Genome Res.">
        <title>Towards a catalog of human genes and proteins: sequencing and analysis of 500 novel complete protein coding human cDNAs.</title>
        <authorList>
            <person name="Wiemann S."/>
            <person name="Weil B."/>
            <person name="Wellenreuther R."/>
            <person name="Gassenhuber J."/>
            <person name="Glassl S."/>
            <person name="Ansorge W."/>
            <person name="Boecher M."/>
            <person name="Bloecker H."/>
            <person name="Bauersachs S."/>
            <person name="Blum H."/>
            <person name="Lauber J."/>
            <person name="Duesterhoeft A."/>
            <person name="Beyer A."/>
            <person name="Koehrer K."/>
            <person name="Strack N."/>
            <person name="Mewes H.-W."/>
            <person name="Ottenwaelder B."/>
            <person name="Obermaier B."/>
            <person name="Tampe J."/>
            <person name="Heubner D."/>
            <person name="Wambutt R."/>
            <person name="Korn B."/>
            <person name="Klein M."/>
            <person name="Poustka A."/>
        </authorList>
    </citation>
    <scope>NUCLEOTIDE SEQUENCE [LARGE SCALE MRNA] (ISOFORM 1)</scope>
    <source>
        <tissue>Uterus</tissue>
    </source>
</reference>
<reference key="4">
    <citation type="journal article" date="2004" name="Nat. Genet.">
        <title>Complete sequencing and characterization of 21,243 full-length human cDNAs.</title>
        <authorList>
            <person name="Ota T."/>
            <person name="Suzuki Y."/>
            <person name="Nishikawa T."/>
            <person name="Otsuki T."/>
            <person name="Sugiyama T."/>
            <person name="Irie R."/>
            <person name="Wakamatsu A."/>
            <person name="Hayashi K."/>
            <person name="Sato H."/>
            <person name="Nagai K."/>
            <person name="Kimura K."/>
            <person name="Makita H."/>
            <person name="Sekine M."/>
            <person name="Obayashi M."/>
            <person name="Nishi T."/>
            <person name="Shibahara T."/>
            <person name="Tanaka T."/>
            <person name="Ishii S."/>
            <person name="Yamamoto J."/>
            <person name="Saito K."/>
            <person name="Kawai Y."/>
            <person name="Isono Y."/>
            <person name="Nakamura Y."/>
            <person name="Nagahari K."/>
            <person name="Murakami K."/>
            <person name="Yasuda T."/>
            <person name="Iwayanagi T."/>
            <person name="Wagatsuma M."/>
            <person name="Shiratori A."/>
            <person name="Sudo H."/>
            <person name="Hosoiri T."/>
            <person name="Kaku Y."/>
            <person name="Kodaira H."/>
            <person name="Kondo H."/>
            <person name="Sugawara M."/>
            <person name="Takahashi M."/>
            <person name="Kanda K."/>
            <person name="Yokoi T."/>
            <person name="Furuya T."/>
            <person name="Kikkawa E."/>
            <person name="Omura Y."/>
            <person name="Abe K."/>
            <person name="Kamihara K."/>
            <person name="Katsuta N."/>
            <person name="Sato K."/>
            <person name="Tanikawa M."/>
            <person name="Yamazaki M."/>
            <person name="Ninomiya K."/>
            <person name="Ishibashi T."/>
            <person name="Yamashita H."/>
            <person name="Murakawa K."/>
            <person name="Fujimori K."/>
            <person name="Tanai H."/>
            <person name="Kimata M."/>
            <person name="Watanabe M."/>
            <person name="Hiraoka S."/>
            <person name="Chiba Y."/>
            <person name="Ishida S."/>
            <person name="Ono Y."/>
            <person name="Takiguchi S."/>
            <person name="Watanabe S."/>
            <person name="Yosida M."/>
            <person name="Hotuta T."/>
            <person name="Kusano J."/>
            <person name="Kanehori K."/>
            <person name="Takahashi-Fujii A."/>
            <person name="Hara H."/>
            <person name="Tanase T.-O."/>
            <person name="Nomura Y."/>
            <person name="Togiya S."/>
            <person name="Komai F."/>
            <person name="Hara R."/>
            <person name="Takeuchi K."/>
            <person name="Arita M."/>
            <person name="Imose N."/>
            <person name="Musashino K."/>
            <person name="Yuuki H."/>
            <person name="Oshima A."/>
            <person name="Sasaki N."/>
            <person name="Aotsuka S."/>
            <person name="Yoshikawa Y."/>
            <person name="Matsunawa H."/>
            <person name="Ichihara T."/>
            <person name="Shiohata N."/>
            <person name="Sano S."/>
            <person name="Moriya S."/>
            <person name="Momiyama H."/>
            <person name="Satoh N."/>
            <person name="Takami S."/>
            <person name="Terashima Y."/>
            <person name="Suzuki O."/>
            <person name="Nakagawa S."/>
            <person name="Senoh A."/>
            <person name="Mizoguchi H."/>
            <person name="Goto Y."/>
            <person name="Shimizu F."/>
            <person name="Wakebe H."/>
            <person name="Hishigaki H."/>
            <person name="Watanabe T."/>
            <person name="Sugiyama A."/>
            <person name="Takemoto M."/>
            <person name="Kawakami B."/>
            <person name="Yamazaki M."/>
            <person name="Watanabe K."/>
            <person name="Kumagai A."/>
            <person name="Itakura S."/>
            <person name="Fukuzumi Y."/>
            <person name="Fujimori Y."/>
            <person name="Komiyama M."/>
            <person name="Tashiro H."/>
            <person name="Tanigami A."/>
            <person name="Fujiwara T."/>
            <person name="Ono T."/>
            <person name="Yamada K."/>
            <person name="Fujii Y."/>
            <person name="Ozaki K."/>
            <person name="Hirao M."/>
            <person name="Ohmori Y."/>
            <person name="Kawabata A."/>
            <person name="Hikiji T."/>
            <person name="Kobatake N."/>
            <person name="Inagaki H."/>
            <person name="Ikema Y."/>
            <person name="Okamoto S."/>
            <person name="Okitani R."/>
            <person name="Kawakami T."/>
            <person name="Noguchi S."/>
            <person name="Itoh T."/>
            <person name="Shigeta K."/>
            <person name="Senba T."/>
            <person name="Matsumura K."/>
            <person name="Nakajima Y."/>
            <person name="Mizuno T."/>
            <person name="Morinaga M."/>
            <person name="Sasaki M."/>
            <person name="Togashi T."/>
            <person name="Oyama M."/>
            <person name="Hata H."/>
            <person name="Watanabe M."/>
            <person name="Komatsu T."/>
            <person name="Mizushima-Sugano J."/>
            <person name="Satoh T."/>
            <person name="Shirai Y."/>
            <person name="Takahashi Y."/>
            <person name="Nakagawa K."/>
            <person name="Okumura K."/>
            <person name="Nagase T."/>
            <person name="Nomura N."/>
            <person name="Kikuchi H."/>
            <person name="Masuho Y."/>
            <person name="Yamashita R."/>
            <person name="Nakai K."/>
            <person name="Yada T."/>
            <person name="Nakamura Y."/>
            <person name="Ohara O."/>
            <person name="Isogai T."/>
            <person name="Sugano S."/>
        </authorList>
    </citation>
    <scope>NUCLEOTIDE SEQUENCE [LARGE SCALE MRNA] (ISOFORMS 3 AND 4)</scope>
    <scope>VARIANT ILE-289</scope>
</reference>
<reference key="5">
    <citation type="journal article" date="2004" name="Genome Res.">
        <title>The status, quality, and expansion of the NIH full-length cDNA project: the Mammalian Gene Collection (MGC).</title>
        <authorList>
            <consortium name="The MGC Project Team"/>
        </authorList>
    </citation>
    <scope>NUCLEOTIDE SEQUENCE [LARGE SCALE MRNA] (ISOFORM 3)</scope>
    <source>
        <tissue>Muscle</tissue>
    </source>
</reference>
<reference key="6">
    <citation type="journal article" date="2004" name="Am. J. Hum. Genet.">
        <title>Identification and functional analysis of a defect in the human ALG9 gene: definition of congenital disorder of glycosylation type IL.</title>
        <authorList>
            <person name="Frank C.G."/>
            <person name="Grubenmann C.E."/>
            <person name="Eyaid W."/>
            <person name="Berger E.G."/>
            <person name="Aebi M."/>
            <person name="Hennet T."/>
        </authorList>
    </citation>
    <scope>FUNCTION</scope>
    <scope>CATALYTIC ACTIVITY</scope>
    <scope>PATHWAY</scope>
    <scope>SUBCELLULAR LOCATION</scope>
    <scope>VARIANT CDG1L LYS-523</scope>
    <scope>VARIANT ILE-289</scope>
</reference>
<reference key="7">
    <citation type="journal article" date="2005" name="Am. J. Med. Genet. A">
        <title>CDG-IL: an infant with a novel mutation in the ALG9 gene and additional phenotypic features.</title>
        <authorList>
            <person name="Weinstein M."/>
            <person name="Schollen E."/>
            <person name="Matthijs G."/>
            <person name="Neupert C."/>
            <person name="Hennet T."/>
            <person name="Grubenmann C.E."/>
            <person name="Frank C.G."/>
            <person name="Aebi M."/>
            <person name="Clarke J.T.R."/>
            <person name="Griffiths A."/>
            <person name="Seargeant L."/>
            <person name="Poplawski N."/>
        </authorList>
    </citation>
    <scope>FUNCTION</scope>
    <scope>CATALYTIC ACTIVITY</scope>
    <scope>PATHWAY</scope>
    <scope>VARIANT CDG1L CYS-287</scope>
</reference>
<reference key="8">
    <citation type="journal article" date="2006" name="Behav. Brain Funct.">
        <title>Common variations in ALG9 are not associated with bipolar I disorder: a family-based study.</title>
        <authorList>
            <person name="Baysal B.E."/>
            <person name="Willett-Brozick J.E."/>
            <person name="Bacanu S.A."/>
            <person name="Detera-Wadleigh S."/>
            <person name="Nimgaonkar V.L."/>
        </authorList>
    </citation>
    <scope>LACK OF ASSOCIATION WITH BIPOLAR AFFECTIVE DISORDERS</scope>
</reference>
<reference key="9">
    <citation type="journal article" date="2016" name="Eur. J. Hum. Genet.">
        <title>A novel phenotype in N-glycosylation disorders: Gillessen-Kaesbach-Nishimura skeletal dysplasia due to pathogenic variants in ALG9.</title>
        <authorList>
            <person name="Tham E."/>
            <person name="Eklund E.A."/>
            <person name="Hammarsjoe A."/>
            <person name="Bengtson P."/>
            <person name="Geiberger S."/>
            <person name="Lagerstedt-Robinson K."/>
            <person name="Malmgren H."/>
            <person name="Nilsson D."/>
            <person name="Grigelionis G."/>
            <person name="Conner P."/>
            <person name="Lindgren P."/>
            <person name="Lindstrand A."/>
            <person name="Wedell A."/>
            <person name="Albaage M."/>
            <person name="Zielinska K."/>
            <person name="Nordgren A."/>
            <person name="Papadogiannakis N."/>
            <person name="Nishimura G."/>
            <person name="Grigelioniene G."/>
        </authorList>
    </citation>
    <scope>INVOLVEMENT IN GIKANIS</scope>
</reference>
<dbReference type="EC" id="2.4.1.259" evidence="6 7"/>
<dbReference type="EC" id="2.4.1.261" evidence="6 7"/>
<dbReference type="EMBL" id="AF395532">
    <property type="protein sequence ID" value="AAL25798.1"/>
    <property type="molecule type" value="mRNA"/>
</dbReference>
<dbReference type="EMBL" id="AF454937">
    <property type="protein sequence ID" value="AAP97696.1"/>
    <property type="molecule type" value="mRNA"/>
</dbReference>
<dbReference type="EMBL" id="AL136927">
    <property type="protein sequence ID" value="CAB66861.1"/>
    <property type="molecule type" value="mRNA"/>
</dbReference>
<dbReference type="EMBL" id="AK025498">
    <property type="protein sequence ID" value="BAB15154.1"/>
    <property type="molecule type" value="mRNA"/>
</dbReference>
<dbReference type="EMBL" id="AK172828">
    <property type="protein sequence ID" value="BAD18793.1"/>
    <property type="molecule type" value="mRNA"/>
</dbReference>
<dbReference type="EMBL" id="BC009255">
    <property type="protein sequence ID" value="AAH09255.1"/>
    <property type="molecule type" value="mRNA"/>
</dbReference>
<dbReference type="CCDS" id="CCDS41714.1">
    <molecule id="Q9H6U8-4"/>
</dbReference>
<dbReference type="CCDS" id="CCDS53709.1">
    <molecule id="Q9H6U8-2"/>
</dbReference>
<dbReference type="CCDS" id="CCDS73379.1">
    <molecule id="Q9H6U8-1"/>
</dbReference>
<dbReference type="CCDS" id="CCDS73380.1">
    <molecule id="Q9H6U8-3"/>
</dbReference>
<dbReference type="RefSeq" id="NP_001071158.1">
    <molecule id="Q9H6U8-1"/>
    <property type="nucleotide sequence ID" value="NM_001077690.1"/>
</dbReference>
<dbReference type="RefSeq" id="NP_001071159.1">
    <molecule id="Q9H6U8-4"/>
    <property type="nucleotide sequence ID" value="NM_001077691.2"/>
</dbReference>
<dbReference type="RefSeq" id="NP_001071160.1">
    <molecule id="Q9H6U8-2"/>
    <property type="nucleotide sequence ID" value="NM_001077692.2"/>
</dbReference>
<dbReference type="RefSeq" id="NP_001339338.1">
    <molecule id="Q9H6U8-2"/>
    <property type="nucleotide sequence ID" value="NM_001352409.1"/>
</dbReference>
<dbReference type="RefSeq" id="NP_001339339.1">
    <molecule id="Q9H6U8-2"/>
    <property type="nucleotide sequence ID" value="NM_001352410.1"/>
</dbReference>
<dbReference type="RefSeq" id="NP_001339340.1">
    <molecule id="Q9H6U8-2"/>
    <property type="nucleotide sequence ID" value="NM_001352411.2"/>
</dbReference>
<dbReference type="RefSeq" id="NP_001339341.1">
    <molecule id="Q9H6U8-2"/>
    <property type="nucleotide sequence ID" value="NM_001352412.2"/>
</dbReference>
<dbReference type="RefSeq" id="NP_001339342.1">
    <molecule id="Q9H6U8-4"/>
    <property type="nucleotide sequence ID" value="NM_001352413.1"/>
</dbReference>
<dbReference type="RefSeq" id="NP_001339343.1">
    <molecule id="Q9H6U8-4"/>
    <property type="nucleotide sequence ID" value="NM_001352414.2"/>
</dbReference>
<dbReference type="RefSeq" id="NP_079016.2">
    <molecule id="Q9H6U8-3"/>
    <property type="nucleotide sequence ID" value="NM_024740.2"/>
</dbReference>
<dbReference type="RefSeq" id="XP_016873808.1">
    <property type="nucleotide sequence ID" value="XM_017018319.1"/>
</dbReference>
<dbReference type="RefSeq" id="XP_016873809.1">
    <property type="nucleotide sequence ID" value="XM_017018320.1"/>
</dbReference>
<dbReference type="RefSeq" id="XP_016873810.1">
    <property type="nucleotide sequence ID" value="XM_017018321.1"/>
</dbReference>
<dbReference type="RefSeq" id="XP_016873811.1">
    <property type="nucleotide sequence ID" value="XM_017018322.1"/>
</dbReference>
<dbReference type="BioGRID" id="122893">
    <property type="interactions" value="84"/>
</dbReference>
<dbReference type="FunCoup" id="Q9H6U8">
    <property type="interactions" value="2471"/>
</dbReference>
<dbReference type="IntAct" id="Q9H6U8">
    <property type="interactions" value="60"/>
</dbReference>
<dbReference type="STRING" id="9606.ENSP00000482396"/>
<dbReference type="CAZy" id="GT22">
    <property type="family name" value="Glycosyltransferase Family 22"/>
</dbReference>
<dbReference type="GlyCosmos" id="Q9H6U8">
    <property type="glycosylation" value="2 sites, No reported glycans"/>
</dbReference>
<dbReference type="GlyGen" id="Q9H6U8">
    <property type="glycosylation" value="4 sites, 1 N-linked glycan (1 site), 1 O-linked glycan (1 site)"/>
</dbReference>
<dbReference type="iPTMnet" id="Q9H6U8"/>
<dbReference type="PhosphoSitePlus" id="Q9H6U8"/>
<dbReference type="SwissPalm" id="Q9H6U8"/>
<dbReference type="BioMuta" id="ALG9"/>
<dbReference type="DMDM" id="73921666"/>
<dbReference type="jPOST" id="Q9H6U8"/>
<dbReference type="MassIVE" id="Q9H6U8"/>
<dbReference type="PaxDb" id="9606-ENSP00000482396"/>
<dbReference type="PeptideAtlas" id="Q9H6U8"/>
<dbReference type="ProteomicsDB" id="81040">
    <molecule id="Q9H6U8-1"/>
</dbReference>
<dbReference type="ProteomicsDB" id="81041">
    <molecule id="Q9H6U8-2"/>
</dbReference>
<dbReference type="ProteomicsDB" id="81042">
    <molecule id="Q9H6U8-3"/>
</dbReference>
<dbReference type="ProteomicsDB" id="81043">
    <molecule id="Q9H6U8-4"/>
</dbReference>
<dbReference type="Pumba" id="Q9H6U8"/>
<dbReference type="Antibodypedia" id="51337">
    <property type="antibodies" value="68 antibodies from 15 providers"/>
</dbReference>
<dbReference type="DNASU" id="79796"/>
<dbReference type="Ensembl" id="ENST00000398006.6">
    <molecule id="Q9H6U8-2"/>
    <property type="protein sequence ID" value="ENSP00000381090.2"/>
    <property type="gene ID" value="ENSG00000086848.15"/>
</dbReference>
<dbReference type="Ensembl" id="ENST00000531154.5">
    <molecule id="Q9H6U8-4"/>
    <property type="protein sequence ID" value="ENSP00000435517.1"/>
    <property type="gene ID" value="ENSG00000086848.15"/>
</dbReference>
<dbReference type="Ensembl" id="ENST00000614444.4">
    <molecule id="Q9H6U8-1"/>
    <property type="protein sequence ID" value="ENSP00000484200.1"/>
    <property type="gene ID" value="ENSG00000086848.15"/>
</dbReference>
<dbReference type="Ensembl" id="ENST00000616540.5">
    <molecule id="Q9H6U8-3"/>
    <property type="protein sequence ID" value="ENSP00000482437.1"/>
    <property type="gene ID" value="ENSG00000086848.15"/>
</dbReference>
<dbReference type="GeneID" id="79796"/>
<dbReference type="KEGG" id="hsa:79796"/>
<dbReference type="MANE-Select" id="ENST00000616540.5">
    <molecule id="Q9H6U8-3"/>
    <property type="protein sequence ID" value="ENSP00000482437.1"/>
    <property type="RefSeq nucleotide sequence ID" value="NM_024740.2"/>
    <property type="RefSeq protein sequence ID" value="NP_079016.2"/>
</dbReference>
<dbReference type="UCSC" id="uc001ply.4">
    <molecule id="Q9H6U8-1"/>
    <property type="organism name" value="human"/>
</dbReference>
<dbReference type="AGR" id="HGNC:15672"/>
<dbReference type="CTD" id="79796"/>
<dbReference type="DisGeNET" id="79796"/>
<dbReference type="GeneCards" id="ALG9"/>
<dbReference type="GeneReviews" id="ALG9"/>
<dbReference type="HGNC" id="HGNC:15672">
    <property type="gene designation" value="ALG9"/>
</dbReference>
<dbReference type="HPA" id="ENSG00000086848">
    <property type="expression patterns" value="Low tissue specificity"/>
</dbReference>
<dbReference type="MalaCards" id="ALG9"/>
<dbReference type="MIM" id="263210">
    <property type="type" value="phenotype"/>
</dbReference>
<dbReference type="MIM" id="606941">
    <property type="type" value="gene"/>
</dbReference>
<dbReference type="MIM" id="608776">
    <property type="type" value="phenotype"/>
</dbReference>
<dbReference type="neXtProt" id="NX_Q9H6U8"/>
<dbReference type="OpenTargets" id="ENSG00000086848"/>
<dbReference type="Orphanet" id="79328">
    <property type="disease" value="ALG9-CDG"/>
</dbReference>
<dbReference type="Orphanet" id="730">
    <property type="disease" value="Autosomal dominant polycystic kidney disease"/>
</dbReference>
<dbReference type="PharmGKB" id="PA134887582"/>
<dbReference type="VEuPathDB" id="HostDB:ENSG00000086848"/>
<dbReference type="eggNOG" id="KOG2515">
    <property type="taxonomic scope" value="Eukaryota"/>
</dbReference>
<dbReference type="eggNOG" id="KOG4174">
    <property type="taxonomic scope" value="Eukaryota"/>
</dbReference>
<dbReference type="GeneTree" id="ENSGT00950000183090"/>
<dbReference type="HOGENOM" id="CLU_018152_1_1_1"/>
<dbReference type="InParanoid" id="Q9H6U8"/>
<dbReference type="OMA" id="PRDMHAK"/>
<dbReference type="OrthoDB" id="497541at2759"/>
<dbReference type="PAN-GO" id="Q9H6U8">
    <property type="GO annotations" value="3 GO annotations based on evolutionary models"/>
</dbReference>
<dbReference type="PhylomeDB" id="Q9H6U8"/>
<dbReference type="BRENDA" id="2.4.1.259">
    <property type="organism ID" value="2681"/>
</dbReference>
<dbReference type="BRENDA" id="2.4.1.261">
    <property type="organism ID" value="2681"/>
</dbReference>
<dbReference type="PathwayCommons" id="Q9H6U8"/>
<dbReference type="Reactome" id="R-HSA-446193">
    <property type="pathway name" value="Biosynthesis of the N-glycan precursor (dolichol lipid-linked oligosaccharide, LLO) and transfer to a nascent protein"/>
</dbReference>
<dbReference type="Reactome" id="R-HSA-4720454">
    <property type="pathway name" value="Defective ALG9 causes CDG-1l"/>
</dbReference>
<dbReference type="SignaLink" id="Q9H6U8"/>
<dbReference type="UniPathway" id="UPA00378"/>
<dbReference type="BioGRID-ORCS" id="79796">
    <property type="hits" value="73 hits in 1156 CRISPR screens"/>
</dbReference>
<dbReference type="ChiTaRS" id="ALG9">
    <property type="organism name" value="human"/>
</dbReference>
<dbReference type="GeneWiki" id="ALG9"/>
<dbReference type="GenomeRNAi" id="79796"/>
<dbReference type="Pharos" id="Q9H6U8">
    <property type="development level" value="Tbio"/>
</dbReference>
<dbReference type="PRO" id="PR:Q9H6U8"/>
<dbReference type="Proteomes" id="UP000005640">
    <property type="component" value="Chromosome 11"/>
</dbReference>
<dbReference type="RNAct" id="Q9H6U8">
    <property type="molecule type" value="protein"/>
</dbReference>
<dbReference type="Bgee" id="ENSG00000086848">
    <property type="expression patterns" value="Expressed in endothelial cell and 167 other cell types or tissues"/>
</dbReference>
<dbReference type="ExpressionAtlas" id="Q9H6U8">
    <property type="expression patterns" value="baseline and differential"/>
</dbReference>
<dbReference type="GO" id="GO:0005789">
    <property type="term" value="C:endoplasmic reticulum membrane"/>
    <property type="evidence" value="ECO:0000318"/>
    <property type="project" value="GO_Central"/>
</dbReference>
<dbReference type="GO" id="GO:0098553">
    <property type="term" value="C:lumenal side of endoplasmic reticulum membrane"/>
    <property type="evidence" value="ECO:0000305"/>
    <property type="project" value="UniProt"/>
</dbReference>
<dbReference type="GO" id="GO:0016020">
    <property type="term" value="C:membrane"/>
    <property type="evidence" value="ECO:0007005"/>
    <property type="project" value="UniProtKB"/>
</dbReference>
<dbReference type="GO" id="GO:0000026">
    <property type="term" value="F:alpha-1,2-mannosyltransferase activity"/>
    <property type="evidence" value="ECO:0000318"/>
    <property type="project" value="GO_Central"/>
</dbReference>
<dbReference type="GO" id="GO:0052926">
    <property type="term" value="F:dol-P-Man:Man(6)GlcNAc(2)-PP-Dol alpha-1,2-mannosyltransferase activity"/>
    <property type="evidence" value="ECO:0000316"/>
    <property type="project" value="UniProtKB"/>
</dbReference>
<dbReference type="GO" id="GO:0052918">
    <property type="term" value="F:dol-P-Man:Man(8)GlcNAc(2)-PP-Dol alpha-1,2-mannosyltransferase activity"/>
    <property type="evidence" value="ECO:0000316"/>
    <property type="project" value="UniProtKB"/>
</dbReference>
<dbReference type="GO" id="GO:0006488">
    <property type="term" value="P:dolichol-linked oligosaccharide biosynthetic process"/>
    <property type="evidence" value="ECO:0000316"/>
    <property type="project" value="UniProtKB"/>
</dbReference>
<dbReference type="GO" id="GO:0006487">
    <property type="term" value="P:protein N-linked glycosylation"/>
    <property type="evidence" value="ECO:0000315"/>
    <property type="project" value="UniProtKB"/>
</dbReference>
<dbReference type="InterPro" id="IPR005599">
    <property type="entry name" value="GPI_mannosylTrfase"/>
</dbReference>
<dbReference type="PANTHER" id="PTHR22760:SF2">
    <property type="entry name" value="ALPHA-1,2-MANNOSYLTRANSFERASE ALG9"/>
    <property type="match status" value="1"/>
</dbReference>
<dbReference type="PANTHER" id="PTHR22760">
    <property type="entry name" value="GLYCOSYLTRANSFERASE"/>
    <property type="match status" value="1"/>
</dbReference>
<dbReference type="Pfam" id="PF03901">
    <property type="entry name" value="Glyco_transf_22"/>
    <property type="match status" value="1"/>
</dbReference>
<name>ALG9_HUMAN</name>
<gene>
    <name evidence="15" type="primary">ALG9</name>
    <name evidence="9" type="synonym">DIBD1</name>
</gene>
<comment type="function">
    <text evidence="6 7">Mannosyltransferase that operates in the biosynthetic pathway of dolichol-linked oligosaccharides, the glycan precursors employed in protein asparagine (N)-glycosylation. The assembly of dolichol-linked oligosaccharides begins on the cytosolic side of the endoplasmic reticulum membrane and finishes in its lumen. The sequential addition of sugars to dolichol pyrophosphate produces dolichol-linked oligosaccharides containing fourteen sugars, including two GlcNAcs, nine mannoses and three glucoses. Once assembled, the oligosaccharide is transferred from the lipid to nascent proteins by oligosaccharyltransferases. In the lumen of the endoplasmic reticulum, catalyzes the addition of the seventh and ninth alpha-1,2-linked mannose residues to Man(6)GlcNAc(2)-PP-dolichol and Man(8)GlcNAc(2)-PP-dolichol respectively.</text>
</comment>
<comment type="catalytic activity">
    <reaction evidence="6 7">
        <text>an alpha-D-Man-(1-&gt;2)-alpha-D-Man-(1-&gt;2)-alpha-D-Man-(1-&gt;3)-[alpha-D-Man-(1-&gt;3)-alpha-D-Man-(1-&gt;6)]-beta-D-Man-(1-&gt;4)-beta-D-GlcNAc-(1-&gt;4)-alpha-D-GlcNAc-diphospho-di-trans,poly-cis-dolichol + a di-trans,poly-cis-dolichyl beta-D-mannosyl phosphate = an alpha-D-Man-(1-&gt;2)-alpha-D-Man-(1-&gt;2)-alpha-D-Man-(1-&gt;3)-[alpha-D-Man-(1-&gt;2)-alpha-D-Man-(1-&gt;3)-alpha-D-Man-(1-&gt;6)]-beta-D-Man-(1-&gt;4)-beta-D-GlcNAc-(1-&gt;4)-alpha-D-GlcNAc-diphospho-di-trans,poly-cis-dolichol + a di-trans,poly-cis-dolichyl phosphate + H(+)</text>
        <dbReference type="Rhea" id="RHEA:29531"/>
        <dbReference type="Rhea" id="RHEA-COMP:19498"/>
        <dbReference type="Rhea" id="RHEA-COMP:19501"/>
        <dbReference type="Rhea" id="RHEA-COMP:19517"/>
        <dbReference type="Rhea" id="RHEA-COMP:19518"/>
        <dbReference type="ChEBI" id="CHEBI:15378"/>
        <dbReference type="ChEBI" id="CHEBI:57683"/>
        <dbReference type="ChEBI" id="CHEBI:58211"/>
        <dbReference type="ChEBI" id="CHEBI:132516"/>
        <dbReference type="ChEBI" id="CHEBI:132517"/>
        <dbReference type="EC" id="2.4.1.259"/>
    </reaction>
    <physiologicalReaction direction="left-to-right" evidence="14">
        <dbReference type="Rhea" id="RHEA:29532"/>
    </physiologicalReaction>
</comment>
<comment type="catalytic activity">
    <reaction evidence="6 7">
        <text>an alpha-D-Man-(1-&gt;2)-alpha-D-Man-(1-&gt;2)-alpha-D-Man-(1-&gt;3)-[alpha-D-Man-(1-&gt;2)-alpha-D-Man-(1-&gt;3)-[alpha-D-Man-(1-&gt;6)]-alpha-D-Man-(1-&gt;6)]-beta-D-Man-(1-&gt;4)-beta-D-GlcNAc-(1-&gt;4)-alpha-D-GlcNAc-diphospho-di-trans,poly-cis-dolichol + a di-trans,poly-cis-dolichyl beta-D-mannosyl phosphate = an alpha-D-Man-(1-&gt;2)-alpha-D-Man-(1-&gt;2)-alpha-D-Man-(1-&gt;3)-[alpha-D-Man-(1-&gt;2)-alpha-D-Man-(1-&gt;3)-[alpha-D-Man-(1-&gt;2)-alpha-D-Man-(1-&gt;6)]-alpha-D-Man-(1-&gt;6)]-beta-D-Man-(1-&gt;4)-beta-D-GlcNAc-(1-&gt;4)-alpha-D-GlcNAc-diphospho-di-trans,poly-cis-dolichol + a di-trans,poly-cis-dolichyl phosphate + H(+)</text>
        <dbReference type="Rhea" id="RHEA:29539"/>
        <dbReference type="Rhea" id="RHEA-COMP:19498"/>
        <dbReference type="Rhea" id="RHEA-COMP:19501"/>
        <dbReference type="Rhea" id="RHEA-COMP:19519"/>
        <dbReference type="Rhea" id="RHEA-COMP:19520"/>
        <dbReference type="ChEBI" id="CHEBI:15378"/>
        <dbReference type="ChEBI" id="CHEBI:57683"/>
        <dbReference type="ChEBI" id="CHEBI:58211"/>
        <dbReference type="ChEBI" id="CHEBI:132519"/>
        <dbReference type="ChEBI" id="CHEBI:132520"/>
        <dbReference type="EC" id="2.4.1.261"/>
    </reaction>
    <physiologicalReaction direction="left-to-right" evidence="14">
        <dbReference type="Rhea" id="RHEA:29540"/>
    </physiologicalReaction>
</comment>
<comment type="pathway">
    <text evidence="6 7">Protein modification; protein glycosylation.</text>
</comment>
<comment type="subcellular location">
    <subcellularLocation>
        <location evidence="14">Endoplasmic reticulum membrane</location>
        <topology evidence="1">Multi-pass membrane protein</topology>
    </subcellularLocation>
</comment>
<comment type="alternative products">
    <event type="alternative splicing"/>
    <isoform>
        <id>Q9H6U8-1</id>
        <name>1</name>
        <sequence type="displayed"/>
    </isoform>
    <isoform>
        <id>Q9H6U8-2</id>
        <name>2</name>
        <sequence type="described" ref="VSP_015434"/>
    </isoform>
    <isoform>
        <id>Q9H6U8-3</id>
        <name>3</name>
        <sequence type="described" ref="VSP_015435"/>
    </isoform>
    <isoform>
        <id>Q9H6U8-4</id>
        <name>4</name>
        <sequence type="described" ref="VSP_015434 VSP_015435"/>
    </isoform>
</comment>
<comment type="tissue specificity">
    <text evidence="4">Ubiquitously expressed; with highest levels in heart, liver and pancreas.</text>
</comment>
<comment type="disease">
    <text evidence="4">A chromosomal aberration involving ALG9 is found in a family with bipolar affective disorder. Translocation t(9;11)(p24;q23). However, common variations in ALG9 do not play a major role in predisposition to bipolar affective disorder.</text>
</comment>
<comment type="disease" evidence="6 7">
    <disease id="DI-00344">
        <name>Congenital disorder of glycosylation 1L</name>
        <acronym>CDG1L</acronym>
        <description>A form of congenital disorder of glycosylation, a multisystem disorder caused by a defect in glycoprotein biosynthesis and characterized by under-glycosylated serum glycoproteins. Congenital disorders of glycosylation result in a wide variety of clinical features, such as defects in the nervous system development, psychomotor retardation, dysmorphic features, hypotonia, coagulation disorders, and immunodeficiency. The broad spectrum of features reflects the critical role of N-glycoproteins during embryonic development, differentiation, and maintenance of cell functions.</description>
        <dbReference type="MIM" id="608776"/>
    </disease>
    <text>The disease is caused by variants affecting the gene represented in this entry.</text>
</comment>
<comment type="disease" evidence="8">
    <disease id="DI-04737">
        <name>Gillessen-Kaesbach-Nishimura syndrome</name>
        <acronym>GIKANIS</acronym>
        <description>A rare autosomal recessive syndrome characterized by severe skeletal dysplasia, facial dysmorphic features, polycystic kidney disease and other visceral malformations. It may be lethal in utero or early in life. The skeletal features uniformly comprise a round pelvis, mesomelic shortening of the upper limbs and defective ossification of the cervical spine.</description>
        <dbReference type="MIM" id="263210"/>
    </disease>
    <text>The disease is caused by variants affecting the gene represented in this entry.</text>
</comment>
<comment type="similarity">
    <text evidence="13">Belongs to the glycosyltransferase 22 family.</text>
</comment>
<accession>Q9H6U8</accession>
<accession>Q6ZMD5</accession>
<accession>Q7Z4R4</accession>
<accession>Q96GS7</accession>
<accession>Q96PB9</accession>
<accession>Q9H068</accession>